<dbReference type="EMBL" id="AB051546">
    <property type="protein sequence ID" value="BAB21850.1"/>
    <property type="status" value="ALT_INIT"/>
    <property type="molecule type" value="mRNA"/>
</dbReference>
<dbReference type="EMBL" id="AK026318">
    <property type="protein sequence ID" value="BAB15443.1"/>
    <property type="molecule type" value="mRNA"/>
</dbReference>
<dbReference type="EMBL" id="AL136723">
    <property type="protein sequence ID" value="CAB66657.1"/>
    <property type="molecule type" value="mRNA"/>
</dbReference>
<dbReference type="EMBL" id="BC030825">
    <property type="protein sequence ID" value="AAH30825.1"/>
    <property type="molecule type" value="mRNA"/>
</dbReference>
<dbReference type="CCDS" id="CCDS44530.1">
    <molecule id="Q8N612-1"/>
</dbReference>
<dbReference type="CCDS" id="CCDS7760.1">
    <molecule id="Q8N612-2"/>
</dbReference>
<dbReference type="RefSeq" id="NP_001092264.1">
    <molecule id="Q8N612-1"/>
    <property type="nucleotide sequence ID" value="NM_001098794.2"/>
</dbReference>
<dbReference type="RefSeq" id="NP_115503.2">
    <molecule id="Q8N612-2"/>
    <property type="nucleotide sequence ID" value="NM_032127.4"/>
</dbReference>
<dbReference type="RefSeq" id="XP_006718406.1">
    <molecule id="Q8N612-2"/>
    <property type="nucleotide sequence ID" value="XM_006718343.4"/>
</dbReference>
<dbReference type="RefSeq" id="XP_011518699.1">
    <molecule id="Q8N612-2"/>
    <property type="nucleotide sequence ID" value="XM_011520397.3"/>
</dbReference>
<dbReference type="RefSeq" id="XP_047283641.1">
    <molecule id="Q8N612-2"/>
    <property type="nucleotide sequence ID" value="XM_047427685.1"/>
</dbReference>
<dbReference type="RefSeq" id="XP_047283642.1">
    <molecule id="Q8N612-1"/>
    <property type="nucleotide sequence ID" value="XM_047427686.1"/>
</dbReference>
<dbReference type="RefSeq" id="XP_047283643.1">
    <molecule id="Q8N612-1"/>
    <property type="nucleotide sequence ID" value="XM_047427687.1"/>
</dbReference>
<dbReference type="RefSeq" id="XP_047283644.1">
    <molecule id="Q8N612-1"/>
    <property type="nucleotide sequence ID" value="XM_047427688.1"/>
</dbReference>
<dbReference type="PDB" id="8QAT">
    <property type="method" value="EM"/>
    <property type="resolution" value="3.20 A"/>
    <property type="chains" value="C=1-972"/>
</dbReference>
<dbReference type="PDBsum" id="8QAT"/>
<dbReference type="EMDB" id="EMD-18302"/>
<dbReference type="EMDB" id="EMD-18303"/>
<dbReference type="SMR" id="Q8N612"/>
<dbReference type="BioGRID" id="123862">
    <property type="interactions" value="44"/>
</dbReference>
<dbReference type="ComplexPortal" id="CPX-2356">
    <property type="entry name" value="FTS-Hook-FHIP cargo adaptor complex, FHIP1B-HOOK1/3 variant"/>
</dbReference>
<dbReference type="ComplexPortal" id="CPX-2359">
    <property type="entry name" value="FTS-Hook-FHIP cargo adaptor complex, FHIP2B-HOOK1/2/3 variant"/>
</dbReference>
<dbReference type="CORUM" id="Q8N612"/>
<dbReference type="FunCoup" id="Q8N612">
    <property type="interactions" value="608"/>
</dbReference>
<dbReference type="IntAct" id="Q8N612">
    <property type="interactions" value="262"/>
</dbReference>
<dbReference type="STRING" id="9606.ENSP00000265978"/>
<dbReference type="GlyGen" id="Q8N612">
    <property type="glycosylation" value="2 sites"/>
</dbReference>
<dbReference type="iPTMnet" id="Q8N612"/>
<dbReference type="PhosphoSitePlus" id="Q8N612"/>
<dbReference type="BioMuta" id="FAM160A2"/>
<dbReference type="DMDM" id="251757473"/>
<dbReference type="jPOST" id="Q8N612"/>
<dbReference type="MassIVE" id="Q8N612"/>
<dbReference type="PaxDb" id="9606-ENSP00000265978"/>
<dbReference type="PeptideAtlas" id="Q8N612"/>
<dbReference type="ProteomicsDB" id="72122">
    <molecule id="Q8N612-1"/>
</dbReference>
<dbReference type="ProteomicsDB" id="72123">
    <molecule id="Q8N612-2"/>
</dbReference>
<dbReference type="ProteomicsDB" id="72124">
    <molecule id="Q8N612-3"/>
</dbReference>
<dbReference type="Pumba" id="Q8N612"/>
<dbReference type="Antibodypedia" id="67203">
    <property type="antibodies" value="45 antibodies from 12 providers"/>
</dbReference>
<dbReference type="DNASU" id="84067"/>
<dbReference type="Ensembl" id="ENST00000265978.8">
    <molecule id="Q8N612-2"/>
    <property type="protein sequence ID" value="ENSP00000265978.4"/>
    <property type="gene ID" value="ENSG00000051009.11"/>
</dbReference>
<dbReference type="Ensembl" id="ENST00000449352.7">
    <molecule id="Q8N612-1"/>
    <property type="protein sequence ID" value="ENSP00000416918.3"/>
    <property type="gene ID" value="ENSG00000051009.11"/>
</dbReference>
<dbReference type="GeneID" id="84067"/>
<dbReference type="KEGG" id="hsa:84067"/>
<dbReference type="MANE-Select" id="ENST00000449352.7">
    <property type="protein sequence ID" value="ENSP00000416918.3"/>
    <property type="RefSeq nucleotide sequence ID" value="NM_001098794.2"/>
    <property type="RefSeq protein sequence ID" value="NP_001092264.1"/>
</dbReference>
<dbReference type="UCSC" id="uc001mck.5">
    <molecule id="Q8N612-1"/>
    <property type="organism name" value="human"/>
</dbReference>
<dbReference type="AGR" id="HGNC:25378"/>
<dbReference type="CTD" id="84067"/>
<dbReference type="DisGeNET" id="84067"/>
<dbReference type="GeneCards" id="FHIP1B"/>
<dbReference type="HGNC" id="HGNC:25378">
    <property type="gene designation" value="FHIP1B"/>
</dbReference>
<dbReference type="HPA" id="ENSG00000051009">
    <property type="expression patterns" value="Low tissue specificity"/>
</dbReference>
<dbReference type="MIM" id="620229">
    <property type="type" value="gene"/>
</dbReference>
<dbReference type="neXtProt" id="NX_Q8N612"/>
<dbReference type="OpenTargets" id="ENSG00000051009"/>
<dbReference type="VEuPathDB" id="HostDB:ENSG00000051009"/>
<dbReference type="eggNOG" id="KOG3695">
    <property type="taxonomic scope" value="Eukaryota"/>
</dbReference>
<dbReference type="GeneTree" id="ENSGT00950000182936"/>
<dbReference type="HOGENOM" id="CLU_007807_1_0_1"/>
<dbReference type="InParanoid" id="Q8N612"/>
<dbReference type="OMA" id="QQTHTEC"/>
<dbReference type="OrthoDB" id="13130at9604"/>
<dbReference type="PAN-GO" id="Q8N612">
    <property type="GO annotations" value="5 GO annotations based on evolutionary models"/>
</dbReference>
<dbReference type="PhylomeDB" id="Q8N612"/>
<dbReference type="TreeFam" id="TF313941"/>
<dbReference type="PathwayCommons" id="Q8N612"/>
<dbReference type="SignaLink" id="Q8N612"/>
<dbReference type="BioGRID-ORCS" id="84067">
    <property type="hits" value="10 hits in 1161 CRISPR screens"/>
</dbReference>
<dbReference type="ChiTaRS" id="FAM160A2">
    <property type="organism name" value="human"/>
</dbReference>
<dbReference type="GeneWiki" id="C11orf56"/>
<dbReference type="GenomeRNAi" id="84067"/>
<dbReference type="Pharos" id="Q8N612">
    <property type="development level" value="Tbio"/>
</dbReference>
<dbReference type="PRO" id="PR:Q8N612"/>
<dbReference type="Proteomes" id="UP000005640">
    <property type="component" value="Chromosome 11"/>
</dbReference>
<dbReference type="RNAct" id="Q8N612">
    <property type="molecule type" value="protein"/>
</dbReference>
<dbReference type="Bgee" id="ENSG00000051009">
    <property type="expression patterns" value="Expressed in ileal mucosa and 169 other cell types or tissues"/>
</dbReference>
<dbReference type="ExpressionAtlas" id="Q8N612">
    <property type="expression patterns" value="baseline and differential"/>
</dbReference>
<dbReference type="GO" id="GO:0070695">
    <property type="term" value="C:FHF complex"/>
    <property type="evidence" value="ECO:0000314"/>
    <property type="project" value="UniProtKB"/>
</dbReference>
<dbReference type="GO" id="GO:0045022">
    <property type="term" value="P:early endosome to late endosome transport"/>
    <property type="evidence" value="ECO:0000315"/>
    <property type="project" value="UniProtKB"/>
</dbReference>
<dbReference type="GO" id="GO:0007032">
    <property type="term" value="P:endosome organization"/>
    <property type="evidence" value="ECO:0000315"/>
    <property type="project" value="UniProtKB"/>
</dbReference>
<dbReference type="GO" id="GO:0008333">
    <property type="term" value="P:endosome to lysosome transport"/>
    <property type="evidence" value="ECO:0000315"/>
    <property type="project" value="UniProtKB"/>
</dbReference>
<dbReference type="GO" id="GO:0007040">
    <property type="term" value="P:lysosome organization"/>
    <property type="evidence" value="ECO:0000315"/>
    <property type="project" value="UniProtKB"/>
</dbReference>
<dbReference type="GO" id="GO:1905719">
    <property type="term" value="P:protein localization to perinuclear region of cytoplasm"/>
    <property type="evidence" value="ECO:0000315"/>
    <property type="project" value="UniProtKB"/>
</dbReference>
<dbReference type="GO" id="GO:0015031">
    <property type="term" value="P:protein transport"/>
    <property type="evidence" value="ECO:0007669"/>
    <property type="project" value="UniProtKB-KW"/>
</dbReference>
<dbReference type="InterPro" id="IPR019384">
    <property type="entry name" value="FHIP"/>
</dbReference>
<dbReference type="InterPro" id="IPR045669">
    <property type="entry name" value="FHIP_C"/>
</dbReference>
<dbReference type="InterPro" id="IPR045668">
    <property type="entry name" value="FHIP_KELAA_motif"/>
</dbReference>
<dbReference type="PANTHER" id="PTHR21705:SF4">
    <property type="entry name" value="FHF COMPLEX SUBUNIT HOOK-INTERACTING PROTEIN 1B"/>
    <property type="match status" value="1"/>
</dbReference>
<dbReference type="PANTHER" id="PTHR21705">
    <property type="entry name" value="RAI16 PROTEIN-RELATED"/>
    <property type="match status" value="1"/>
</dbReference>
<dbReference type="Pfam" id="PF19314">
    <property type="entry name" value="DUF5917"/>
    <property type="match status" value="1"/>
</dbReference>
<dbReference type="Pfam" id="PF19311">
    <property type="entry name" value="KELAA"/>
    <property type="match status" value="1"/>
</dbReference>
<dbReference type="Pfam" id="PF10257">
    <property type="entry name" value="RAI16-like"/>
    <property type="match status" value="1"/>
</dbReference>
<protein>
    <recommendedName>
        <fullName evidence="11">FHF complex subunit HOOK-interacting protein 1B</fullName>
        <shortName evidence="11">FHIP1B</shortName>
    </recommendedName>
    <alternativeName>
        <fullName evidence="10">FTS- and Hook-interacting protein</fullName>
        <shortName evidence="10">FHIP</shortName>
    </alternativeName>
</protein>
<name>FHI1B_HUMAN</name>
<feature type="chain" id="PRO_0000253859" description="FHF complex subunit HOOK-interacting protein 1B">
    <location>
        <begin position="1"/>
        <end position="972"/>
    </location>
</feature>
<feature type="region of interest" description="Disordered" evidence="3">
    <location>
        <begin position="465"/>
        <end position="548"/>
    </location>
</feature>
<feature type="region of interest" description="Disordered" evidence="3">
    <location>
        <begin position="573"/>
        <end position="644"/>
    </location>
</feature>
<feature type="compositionally biased region" description="Low complexity" evidence="3">
    <location>
        <begin position="478"/>
        <end position="501"/>
    </location>
</feature>
<feature type="compositionally biased region" description="Low complexity" evidence="3">
    <location>
        <begin position="523"/>
        <end position="535"/>
    </location>
</feature>
<feature type="modified residue" description="Phosphoserine" evidence="15">
    <location>
        <position position="467"/>
    </location>
</feature>
<feature type="modified residue" description="Phosphoserine" evidence="1">
    <location>
        <position position="510"/>
    </location>
</feature>
<feature type="modified residue" description="Phosphoserine" evidence="1">
    <location>
        <position position="523"/>
    </location>
</feature>
<feature type="modified residue" description="Phosphoserine" evidence="2">
    <location>
        <position position="529"/>
    </location>
</feature>
<feature type="modified residue" description="Phosphoserine" evidence="2">
    <location>
        <position position="533"/>
    </location>
</feature>
<feature type="modified residue" description="Phosphoserine" evidence="14">
    <location>
        <position position="859"/>
    </location>
</feature>
<feature type="modified residue" description="Phosphoserine" evidence="13 14">
    <location>
        <position position="897"/>
    </location>
</feature>
<feature type="splice variant" id="VSP_021128" description="In isoform 3." evidence="9">
    <location>
        <begin position="1"/>
        <end position="75"/>
    </location>
</feature>
<feature type="splice variant" id="VSP_021129" description="In isoform 2." evidence="8">
    <original>G</original>
    <variation>GGPSRETGRREDITG</variation>
    <location>
        <position position="479"/>
    </location>
</feature>
<feature type="splice variant" id="VSP_021130" description="In isoform 3." evidence="9">
    <original>VYVNFLLTGLVAQLACHPQPLLRS</original>
    <variation>ALSCSTPTWSSSPVSSPCCRCWAL</variation>
    <location>
        <begin position="757"/>
        <end position="780"/>
    </location>
</feature>
<feature type="splice variant" id="VSP_021131" description="In isoform 3." evidence="9">
    <location>
        <begin position="781"/>
        <end position="972"/>
    </location>
</feature>
<feature type="sequence variant" id="VAR_057805" description="In dbSNP:rs35932378.">
    <original>R</original>
    <variation>W</variation>
    <location>
        <position position="462"/>
    </location>
</feature>
<feature type="sequence variant" id="VAR_028739" description="In dbSNP:rs3750944." evidence="4 5">
    <original>T</original>
    <variation>M</variation>
    <location>
        <position position="491"/>
    </location>
</feature>
<feature type="sequence variant" id="VAR_028740" description="In dbSNP:rs3750943.">
    <original>R</original>
    <variation>L</variation>
    <location>
        <position position="619"/>
    </location>
</feature>
<feature type="sequence variant" id="VAR_028741" description="In dbSNP:rs11040808.">
    <original>Q</original>
    <variation>H</variation>
    <location>
        <position position="754"/>
    </location>
</feature>
<feature type="sequence conflict" description="In Ref. 4; CAB66657." evidence="11" ref="4">
    <original>P</original>
    <variation>S</variation>
    <location>
        <position position="95"/>
    </location>
</feature>
<feature type="sequence conflict" description="In Ref. 4; CAB66657." evidence="11" ref="4">
    <original>M</original>
    <variation>V</variation>
    <location>
        <position position="136"/>
    </location>
</feature>
<feature type="sequence conflict" description="In Ref. 3; BAB15443." evidence="11" ref="3">
    <original>C</original>
    <variation>Y</variation>
    <location>
        <position position="186"/>
    </location>
</feature>
<feature type="sequence conflict" description="In Ref. 4; CAB66657." evidence="11" ref="4">
    <original>A</original>
    <variation>V</variation>
    <location>
        <position position="503"/>
    </location>
</feature>
<feature type="helix" evidence="16">
    <location>
        <begin position="33"/>
        <end position="52"/>
    </location>
</feature>
<feature type="helix" evidence="16">
    <location>
        <begin position="63"/>
        <end position="81"/>
    </location>
</feature>
<feature type="strand" evidence="16">
    <location>
        <begin position="87"/>
        <end position="89"/>
    </location>
</feature>
<feature type="helix" evidence="16">
    <location>
        <begin position="95"/>
        <end position="100"/>
    </location>
</feature>
<feature type="turn" evidence="16">
    <location>
        <begin position="101"/>
        <end position="104"/>
    </location>
</feature>
<feature type="helix" evidence="16">
    <location>
        <begin position="105"/>
        <end position="116"/>
    </location>
</feature>
<feature type="helix" evidence="16">
    <location>
        <begin position="117"/>
        <end position="119"/>
    </location>
</feature>
<feature type="helix" evidence="16">
    <location>
        <begin position="123"/>
        <end position="140"/>
    </location>
</feature>
<feature type="helix" evidence="16">
    <location>
        <begin position="145"/>
        <end position="147"/>
    </location>
</feature>
<feature type="helix" evidence="16">
    <location>
        <begin position="149"/>
        <end position="161"/>
    </location>
</feature>
<feature type="helix" evidence="16">
    <location>
        <begin position="170"/>
        <end position="189"/>
    </location>
</feature>
<feature type="helix" evidence="16">
    <location>
        <begin position="191"/>
        <end position="193"/>
    </location>
</feature>
<feature type="helix" evidence="16">
    <location>
        <begin position="194"/>
        <end position="197"/>
    </location>
</feature>
<feature type="helix" evidence="16">
    <location>
        <begin position="211"/>
        <end position="214"/>
    </location>
</feature>
<feature type="helix" evidence="16">
    <location>
        <begin position="217"/>
        <end position="219"/>
    </location>
</feature>
<feature type="helix" evidence="16">
    <location>
        <begin position="224"/>
        <end position="241"/>
    </location>
</feature>
<feature type="helix" evidence="16">
    <location>
        <begin position="245"/>
        <end position="254"/>
    </location>
</feature>
<feature type="helix" evidence="16">
    <location>
        <begin position="257"/>
        <end position="268"/>
    </location>
</feature>
<feature type="helix" evidence="16">
    <location>
        <begin position="288"/>
        <end position="291"/>
    </location>
</feature>
<feature type="helix" evidence="16">
    <location>
        <begin position="295"/>
        <end position="313"/>
    </location>
</feature>
<feature type="helix" evidence="16">
    <location>
        <begin position="316"/>
        <end position="330"/>
    </location>
</feature>
<feature type="turn" evidence="16">
    <location>
        <begin position="331"/>
        <end position="334"/>
    </location>
</feature>
<feature type="helix" evidence="16">
    <location>
        <begin position="335"/>
        <end position="339"/>
    </location>
</feature>
<feature type="helix" evidence="16">
    <location>
        <begin position="344"/>
        <end position="360"/>
    </location>
</feature>
<feature type="helix" evidence="16">
    <location>
        <begin position="364"/>
        <end position="376"/>
    </location>
</feature>
<feature type="helix" evidence="16">
    <location>
        <begin position="384"/>
        <end position="390"/>
    </location>
</feature>
<feature type="helix" evidence="16">
    <location>
        <begin position="397"/>
        <end position="411"/>
    </location>
</feature>
<feature type="helix" evidence="16">
    <location>
        <begin position="415"/>
        <end position="421"/>
    </location>
</feature>
<feature type="helix" evidence="16">
    <location>
        <begin position="423"/>
        <end position="426"/>
    </location>
</feature>
<feature type="helix" evidence="16">
    <location>
        <begin position="437"/>
        <end position="440"/>
    </location>
</feature>
<feature type="helix" evidence="16">
    <location>
        <begin position="448"/>
        <end position="454"/>
    </location>
</feature>
<feature type="turn" evidence="16">
    <location>
        <begin position="459"/>
        <end position="461"/>
    </location>
</feature>
<feature type="helix" evidence="16">
    <location>
        <begin position="551"/>
        <end position="567"/>
    </location>
</feature>
<feature type="turn" evidence="16">
    <location>
        <begin position="568"/>
        <end position="571"/>
    </location>
</feature>
<feature type="strand" evidence="16">
    <location>
        <begin position="577"/>
        <end position="579"/>
    </location>
</feature>
<feature type="helix" evidence="16">
    <location>
        <begin position="740"/>
        <end position="750"/>
    </location>
</feature>
<feature type="turn" evidence="16">
    <location>
        <begin position="751"/>
        <end position="754"/>
    </location>
</feature>
<feature type="helix" evidence="16">
    <location>
        <begin position="757"/>
        <end position="771"/>
    </location>
</feature>
<feature type="helix" evidence="16">
    <location>
        <begin position="776"/>
        <end position="782"/>
    </location>
</feature>
<feature type="helix" evidence="16">
    <location>
        <begin position="796"/>
        <end position="813"/>
    </location>
</feature>
<feature type="helix" evidence="16">
    <location>
        <begin position="817"/>
        <end position="834"/>
    </location>
</feature>
<feature type="helix" evidence="16">
    <location>
        <begin position="915"/>
        <end position="944"/>
    </location>
</feature>
<feature type="turn" evidence="16">
    <location>
        <begin position="945"/>
        <end position="947"/>
    </location>
</feature>
<feature type="turn" evidence="16">
    <location>
        <begin position="950"/>
        <end position="952"/>
    </location>
</feature>
<organism>
    <name type="scientific">Homo sapiens</name>
    <name type="common">Human</name>
    <dbReference type="NCBI Taxonomy" id="9606"/>
    <lineage>
        <taxon>Eukaryota</taxon>
        <taxon>Metazoa</taxon>
        <taxon>Chordata</taxon>
        <taxon>Craniata</taxon>
        <taxon>Vertebrata</taxon>
        <taxon>Euteleostomi</taxon>
        <taxon>Mammalia</taxon>
        <taxon>Eutheria</taxon>
        <taxon>Euarchontoglires</taxon>
        <taxon>Primates</taxon>
        <taxon>Haplorrhini</taxon>
        <taxon>Catarrhini</taxon>
        <taxon>Hominidae</taxon>
        <taxon>Homo</taxon>
    </lineage>
</organism>
<sequence length="972" mass="105568">MERMNWLSRLASRGPGHRIPQGANLQTPVMADPETCLMVFKNHWSQVVRILERQGPRAAPGGADDLSAVRNHTYQMLTLLAEDRAVPSAPTGPGPLLEFALHEDLLTRVLTWQLQWDELGDGVEERRAEQLKLFEMLVSEARQPLLRHGPVREALLTLLDACGRPVPSSPALDEGLVLLLSQLCVCVAQEPSLLEFFLQPPPEPGAAPRLLLFSRLVPFVHREGTLGQQARDALLLLMALSAGSPTVGRYIADHSYFCPVLATGLSALYSSLPRKIEVPGDDWHCLRREDWLGVPALALFMSSLEFCNAVIQVAHPLVQKQLVDYIHNGFLVPVMGPALHKTSVEEMIASTAYLELFLRSISEPALLRTFLRFLLLHRHDTHTILDTLVARIGSNSRLCMVSLSLFRTLLNLSCEDVLLQLVLRYLVPCNHVMLSQKPAVRDVDLYGRAADKFLSLIPRCCRHHAPSPPRPEHASWARGPGSPSVDSSSVTTVPRPSTPSRLALFLRQQSLGGSESPGPAPCSPGLSASPASSPGRRPTPAEEPGELEDNYLEYLREARRGVDRCVRACRTWSAPYDGERPSPEPSPFGSRTKKRSLLPEEDRNNVGEGEEEELGRRGRAGGAGEGPGHLPPPQLNGVPGSWPEGAKKVRLVPKEGAGELLEGISEGMAGLEGFGQELRELEVALSNGGTGSESPLEPPLPLEEEEAYESFTCPPEPPGPFLSSPLRTLNQLPSQPFTGPFMAVLFAKLENMLQNSVYVNFLLTGLVAQLACHPQPLLRSFLLNTNMVFQPSVKSLLQVLGSVKNKIENFAASQEDFPALLSKAKKYLIARGKLDWAEGPAAGPAPRRSDPLVKSRRPSLGELLLRHAHSPTRARQAAQLVLQPGRDGAGLGLSGGSPGASTPVLLTRGGAPERQGEALRVKNAVYCAVIFPEFLKELAAISQAHAVTSPFLLETSEEGSGPLISGCGPLNP</sequence>
<reference key="1">
    <citation type="journal article" date="2000" name="DNA Res.">
        <title>Prediction of the coding sequences of unidentified human genes. XIX. The complete sequences of 100 new cDNA clones from brain which code for large proteins in vitro.</title>
        <authorList>
            <person name="Nagase T."/>
            <person name="Kikuno R."/>
            <person name="Hattori A."/>
            <person name="Kondo Y."/>
            <person name="Okumura K."/>
            <person name="Ohara O."/>
        </authorList>
    </citation>
    <scope>NUCLEOTIDE SEQUENCE [LARGE SCALE MRNA] (ISOFORM 1)</scope>
    <scope>VARIANT MET-491</scope>
</reference>
<reference key="2">
    <citation type="journal article" date="2002" name="DNA Res.">
        <title>Construction of expression-ready cDNA clones for KIAA genes: manual curation of 330 KIAA cDNA clones.</title>
        <authorList>
            <person name="Nakajima D."/>
            <person name="Okazaki N."/>
            <person name="Yamakawa H."/>
            <person name="Kikuno R."/>
            <person name="Ohara O."/>
            <person name="Nagase T."/>
        </authorList>
    </citation>
    <scope>SEQUENCE REVISION</scope>
</reference>
<reference key="3">
    <citation type="journal article" date="2004" name="Nat. Genet.">
        <title>Complete sequencing and characterization of 21,243 full-length human cDNAs.</title>
        <authorList>
            <person name="Ota T."/>
            <person name="Suzuki Y."/>
            <person name="Nishikawa T."/>
            <person name="Otsuki T."/>
            <person name="Sugiyama T."/>
            <person name="Irie R."/>
            <person name="Wakamatsu A."/>
            <person name="Hayashi K."/>
            <person name="Sato H."/>
            <person name="Nagai K."/>
            <person name="Kimura K."/>
            <person name="Makita H."/>
            <person name="Sekine M."/>
            <person name="Obayashi M."/>
            <person name="Nishi T."/>
            <person name="Shibahara T."/>
            <person name="Tanaka T."/>
            <person name="Ishii S."/>
            <person name="Yamamoto J."/>
            <person name="Saito K."/>
            <person name="Kawai Y."/>
            <person name="Isono Y."/>
            <person name="Nakamura Y."/>
            <person name="Nagahari K."/>
            <person name="Murakami K."/>
            <person name="Yasuda T."/>
            <person name="Iwayanagi T."/>
            <person name="Wagatsuma M."/>
            <person name="Shiratori A."/>
            <person name="Sudo H."/>
            <person name="Hosoiri T."/>
            <person name="Kaku Y."/>
            <person name="Kodaira H."/>
            <person name="Kondo H."/>
            <person name="Sugawara M."/>
            <person name="Takahashi M."/>
            <person name="Kanda K."/>
            <person name="Yokoi T."/>
            <person name="Furuya T."/>
            <person name="Kikkawa E."/>
            <person name="Omura Y."/>
            <person name="Abe K."/>
            <person name="Kamihara K."/>
            <person name="Katsuta N."/>
            <person name="Sato K."/>
            <person name="Tanikawa M."/>
            <person name="Yamazaki M."/>
            <person name="Ninomiya K."/>
            <person name="Ishibashi T."/>
            <person name="Yamashita H."/>
            <person name="Murakawa K."/>
            <person name="Fujimori K."/>
            <person name="Tanai H."/>
            <person name="Kimata M."/>
            <person name="Watanabe M."/>
            <person name="Hiraoka S."/>
            <person name="Chiba Y."/>
            <person name="Ishida S."/>
            <person name="Ono Y."/>
            <person name="Takiguchi S."/>
            <person name="Watanabe S."/>
            <person name="Yosida M."/>
            <person name="Hotuta T."/>
            <person name="Kusano J."/>
            <person name="Kanehori K."/>
            <person name="Takahashi-Fujii A."/>
            <person name="Hara H."/>
            <person name="Tanase T.-O."/>
            <person name="Nomura Y."/>
            <person name="Togiya S."/>
            <person name="Komai F."/>
            <person name="Hara R."/>
            <person name="Takeuchi K."/>
            <person name="Arita M."/>
            <person name="Imose N."/>
            <person name="Musashino K."/>
            <person name="Yuuki H."/>
            <person name="Oshima A."/>
            <person name="Sasaki N."/>
            <person name="Aotsuka S."/>
            <person name="Yoshikawa Y."/>
            <person name="Matsunawa H."/>
            <person name="Ichihara T."/>
            <person name="Shiohata N."/>
            <person name="Sano S."/>
            <person name="Moriya S."/>
            <person name="Momiyama H."/>
            <person name="Satoh N."/>
            <person name="Takami S."/>
            <person name="Terashima Y."/>
            <person name="Suzuki O."/>
            <person name="Nakagawa S."/>
            <person name="Senoh A."/>
            <person name="Mizoguchi H."/>
            <person name="Goto Y."/>
            <person name="Shimizu F."/>
            <person name="Wakebe H."/>
            <person name="Hishigaki H."/>
            <person name="Watanabe T."/>
            <person name="Sugiyama A."/>
            <person name="Takemoto M."/>
            <person name="Kawakami B."/>
            <person name="Yamazaki M."/>
            <person name="Watanabe K."/>
            <person name="Kumagai A."/>
            <person name="Itakura S."/>
            <person name="Fukuzumi Y."/>
            <person name="Fujimori Y."/>
            <person name="Komiyama M."/>
            <person name="Tashiro H."/>
            <person name="Tanigami A."/>
            <person name="Fujiwara T."/>
            <person name="Ono T."/>
            <person name="Yamada K."/>
            <person name="Fujii Y."/>
            <person name="Ozaki K."/>
            <person name="Hirao M."/>
            <person name="Ohmori Y."/>
            <person name="Kawabata A."/>
            <person name="Hikiji T."/>
            <person name="Kobatake N."/>
            <person name="Inagaki H."/>
            <person name="Ikema Y."/>
            <person name="Okamoto S."/>
            <person name="Okitani R."/>
            <person name="Kawakami T."/>
            <person name="Noguchi S."/>
            <person name="Itoh T."/>
            <person name="Shigeta K."/>
            <person name="Senba T."/>
            <person name="Matsumura K."/>
            <person name="Nakajima Y."/>
            <person name="Mizuno T."/>
            <person name="Morinaga M."/>
            <person name="Sasaki M."/>
            <person name="Togashi T."/>
            <person name="Oyama M."/>
            <person name="Hata H."/>
            <person name="Watanabe M."/>
            <person name="Komatsu T."/>
            <person name="Mizushima-Sugano J."/>
            <person name="Satoh T."/>
            <person name="Shirai Y."/>
            <person name="Takahashi Y."/>
            <person name="Nakagawa K."/>
            <person name="Okumura K."/>
            <person name="Nagase T."/>
            <person name="Nomura N."/>
            <person name="Kikuchi H."/>
            <person name="Masuho Y."/>
            <person name="Yamashita R."/>
            <person name="Nakai K."/>
            <person name="Yada T."/>
            <person name="Nakamura Y."/>
            <person name="Ohara O."/>
            <person name="Isogai T."/>
            <person name="Sugano S."/>
        </authorList>
    </citation>
    <scope>NUCLEOTIDE SEQUENCE [LARGE SCALE MRNA] (ISOFORM 3)</scope>
    <scope>VARIANT MET-491</scope>
    <source>
        <tissue>Small intestine</tissue>
    </source>
</reference>
<reference key="4">
    <citation type="journal article" date="2001" name="Genome Res.">
        <title>Towards a catalog of human genes and proteins: sequencing and analysis of 500 novel complete protein coding human cDNAs.</title>
        <authorList>
            <person name="Wiemann S."/>
            <person name="Weil B."/>
            <person name="Wellenreuther R."/>
            <person name="Gassenhuber J."/>
            <person name="Glassl S."/>
            <person name="Ansorge W."/>
            <person name="Boecher M."/>
            <person name="Bloecker H."/>
            <person name="Bauersachs S."/>
            <person name="Blum H."/>
            <person name="Lauber J."/>
            <person name="Duesterhoeft A."/>
            <person name="Beyer A."/>
            <person name="Koehrer K."/>
            <person name="Strack N."/>
            <person name="Mewes H.-W."/>
            <person name="Ottenwaelder B."/>
            <person name="Obermaier B."/>
            <person name="Tampe J."/>
            <person name="Heubner D."/>
            <person name="Wambutt R."/>
            <person name="Korn B."/>
            <person name="Klein M."/>
            <person name="Poustka A."/>
        </authorList>
    </citation>
    <scope>NUCLEOTIDE SEQUENCE [LARGE SCALE MRNA] (ISOFORM 2)</scope>
    <source>
        <tissue>Kidney</tissue>
    </source>
</reference>
<reference key="5">
    <citation type="journal article" date="2004" name="Genome Res.">
        <title>The status, quality, and expansion of the NIH full-length cDNA project: the Mammalian Gene Collection (MGC).</title>
        <authorList>
            <consortium name="The MGC Project Team"/>
        </authorList>
    </citation>
    <scope>NUCLEOTIDE SEQUENCE [LARGE SCALE MRNA] (ISOFORM 1)</scope>
    <source>
        <tissue>Brain</tissue>
    </source>
</reference>
<reference key="6">
    <citation type="journal article" date="2008" name="Mol. Biol. Cell">
        <title>An FTS/Hook/p107(FHIP) complex interacts with and promotes endosomal clustering by the homotypic vacuolar protein sorting complex.</title>
        <authorList>
            <person name="Xu L."/>
            <person name="Sowa M.E."/>
            <person name="Chen J."/>
            <person name="Li X."/>
            <person name="Gygi S.P."/>
            <person name="Harper J.W."/>
        </authorList>
    </citation>
    <scope>IDENTIFICATION BY MASS SPECTROMETRY</scope>
    <scope>IDENTIFICATION IN THE FHF COMPLEX</scope>
    <scope>FUNCTION</scope>
    <scope>ASSOCIATION WITH THE HOPS COMPLEX</scope>
</reference>
<reference key="7">
    <citation type="journal article" date="2008" name="Proc. Natl. Acad. Sci. U.S.A.">
        <title>A quantitative atlas of mitotic phosphorylation.</title>
        <authorList>
            <person name="Dephoure N."/>
            <person name="Zhou C."/>
            <person name="Villen J."/>
            <person name="Beausoleil S.A."/>
            <person name="Bakalarski C.E."/>
            <person name="Elledge S.J."/>
            <person name="Gygi S.P."/>
        </authorList>
    </citation>
    <scope>PHOSPHORYLATION [LARGE SCALE ANALYSIS] AT SER-897</scope>
    <scope>IDENTIFICATION BY MASS SPECTROMETRY [LARGE SCALE ANALYSIS]</scope>
    <source>
        <tissue>Cervix carcinoma</tissue>
    </source>
</reference>
<reference key="8">
    <citation type="journal article" date="2013" name="J. Proteome Res.">
        <title>Toward a comprehensive characterization of a human cancer cell phosphoproteome.</title>
        <authorList>
            <person name="Zhou H."/>
            <person name="Di Palma S."/>
            <person name="Preisinger C."/>
            <person name="Peng M."/>
            <person name="Polat A.N."/>
            <person name="Heck A.J."/>
            <person name="Mohammed S."/>
        </authorList>
    </citation>
    <scope>PHOSPHORYLATION [LARGE SCALE ANALYSIS] AT SER-859 AND SER-897</scope>
    <scope>IDENTIFICATION BY MASS SPECTROMETRY [LARGE SCALE ANALYSIS]</scope>
    <source>
        <tissue>Cervix carcinoma</tissue>
        <tissue>Erythroleukemia</tissue>
    </source>
</reference>
<reference key="9">
    <citation type="journal article" date="2014" name="J. Proteomics">
        <title>An enzyme assisted RP-RPLC approach for in-depth analysis of human liver phosphoproteome.</title>
        <authorList>
            <person name="Bian Y."/>
            <person name="Song C."/>
            <person name="Cheng K."/>
            <person name="Dong M."/>
            <person name="Wang F."/>
            <person name="Huang J."/>
            <person name="Sun D."/>
            <person name="Wang L."/>
            <person name="Ye M."/>
            <person name="Zou H."/>
        </authorList>
    </citation>
    <scope>PHOSPHORYLATION [LARGE SCALE ANALYSIS] AT SER-467</scope>
    <scope>IDENTIFICATION BY MASS SPECTROMETRY [LARGE SCALE ANALYSIS]</scope>
    <source>
        <tissue>Liver</tissue>
    </source>
</reference>
<reference key="10">
    <citation type="journal article" date="2020" name="Mol. Biol. Cell">
        <title>The FTS-Hook-FHIP (FHF) complex interacts with AP-4 to mediate perinuclear distribution of AP-4 and its cargo ATG9A.</title>
        <authorList>
            <person name="Mattera R."/>
            <person name="Williamson C.D."/>
            <person name="Ren X."/>
            <person name="Bonifacino J.S."/>
        </authorList>
    </citation>
    <scope>FUNCTION</scope>
    <scope>INTERACTION WITH AKTIP</scope>
</reference>
<evidence type="ECO:0000250" key="1">
    <source>
        <dbReference type="UniProtKB" id="Q3U2I3"/>
    </source>
</evidence>
<evidence type="ECO:0000250" key="2">
    <source>
        <dbReference type="UniProtKB" id="Q66H54"/>
    </source>
</evidence>
<evidence type="ECO:0000256" key="3">
    <source>
        <dbReference type="SAM" id="MobiDB-lite"/>
    </source>
</evidence>
<evidence type="ECO:0000269" key="4">
    <source>
    </source>
</evidence>
<evidence type="ECO:0000269" key="5">
    <source>
    </source>
</evidence>
<evidence type="ECO:0000269" key="6">
    <source>
    </source>
</evidence>
<evidence type="ECO:0000269" key="7">
    <source>
    </source>
</evidence>
<evidence type="ECO:0000303" key="8">
    <source>
    </source>
</evidence>
<evidence type="ECO:0000303" key="9">
    <source>
    </source>
</evidence>
<evidence type="ECO:0000303" key="10">
    <source>
    </source>
</evidence>
<evidence type="ECO:0000305" key="11"/>
<evidence type="ECO:0000312" key="12">
    <source>
        <dbReference type="HGNC" id="HGNC:25378"/>
    </source>
</evidence>
<evidence type="ECO:0007744" key="13">
    <source>
    </source>
</evidence>
<evidence type="ECO:0007744" key="14">
    <source>
    </source>
</evidence>
<evidence type="ECO:0007744" key="15">
    <source>
    </source>
</evidence>
<evidence type="ECO:0007829" key="16">
    <source>
        <dbReference type="PDB" id="8QAT"/>
    </source>
</evidence>
<gene>
    <name evidence="12" type="primary">FHIP1B</name>
    <name type="synonym">C11orf56</name>
    <name type="synonym">FAM160A2</name>
    <name type="synonym">KIAA1759</name>
</gene>
<keyword id="KW-0002">3D-structure</keyword>
<keyword id="KW-0025">Alternative splicing</keyword>
<keyword id="KW-0597">Phosphoprotein</keyword>
<keyword id="KW-0653">Protein transport</keyword>
<keyword id="KW-1267">Proteomics identification</keyword>
<keyword id="KW-1185">Reference proteome</keyword>
<keyword id="KW-0813">Transport</keyword>
<accession>Q8N612</accession>
<accession>Q9C0A4</accession>
<accession>Q9H0N3</accession>
<accession>Q9H624</accession>
<comment type="function">
    <text evidence="6 7">Component of the FTS/Hook/FHIP complex (FHF complex). The FHF complex may function to promote vesicle trafficking and/or fusion via the homotypic vesicular protein sorting complex (the HOPS complex). FHF complex promotes the distribution of AP-4 complex to the perinuclear area of the cell (PubMed:32073997).</text>
</comment>
<comment type="subunit">
    <text evidence="6 7">Component of the FTS/Hook/FHIP complex (FHF complex), composed of AKTIP/FTS, FHIP1B, and one or more members of the Hook family of proteins HOOK1, HOOK2, and HOOK3 (PubMed:32073997). The FHF complex associates with the homotypic vesicular sorting complex (the HOPS complex).</text>
</comment>
<comment type="interaction">
    <interactant intactId="EBI-742137">
        <id>Q8N612</id>
    </interactant>
    <interactant intactId="EBI-741181">
        <id>Q6RW13</id>
        <label>AGTRAP</label>
    </interactant>
    <organismsDiffer>false</organismsDiffer>
    <experiments>3</experiments>
</comment>
<comment type="interaction">
    <interactant intactId="EBI-742137">
        <id>Q8N612</id>
    </interactant>
    <interactant intactId="EBI-399401">
        <id>P61020</id>
        <label>RAB5B</label>
    </interactant>
    <organismsDiffer>false</organismsDiffer>
    <experiments>4</experiments>
</comment>
<comment type="interaction">
    <interactant intactId="EBI-742137">
        <id>Q8N612</id>
    </interactant>
    <interactant intactId="EBI-750345">
        <id>Q96HR9</id>
        <label>REEP6</label>
    </interactant>
    <organismsDiffer>false</organismsDiffer>
    <experiments>4</experiments>
</comment>
<comment type="interaction">
    <interactant intactId="EBI-32806369">
        <id>Q8N612-1</id>
    </interactant>
    <interactant intactId="EBI-746704">
        <id>Q9UJC3</id>
        <label>HOOK1</label>
    </interactant>
    <organismsDiffer>false</organismsDiffer>
    <experiments>3</experiments>
</comment>
<comment type="alternative products">
    <event type="alternative splicing"/>
    <isoform>
        <id>Q8N612-1</id>
        <name>1</name>
        <sequence type="displayed"/>
    </isoform>
    <isoform>
        <id>Q8N612-2</id>
        <name>2</name>
        <sequence type="described" ref="VSP_021129"/>
    </isoform>
    <isoform>
        <id>Q8N612-3</id>
        <name>3</name>
        <sequence type="described" ref="VSP_021128 VSP_021130 VSP_021131"/>
    </isoform>
</comment>
<comment type="similarity">
    <text evidence="11">Belongs to the FHIP family.</text>
</comment>
<comment type="sequence caution" evidence="11">
    <conflict type="erroneous initiation">
        <sequence resource="EMBL-CDS" id="BAB21850"/>
    </conflict>
    <text>Extended N-terminus.</text>
</comment>
<proteinExistence type="evidence at protein level"/>